<reference key="1">
    <citation type="journal article" date="2004" name="Nat. Genet.">
        <title>Complete sequencing and characterization of 21,243 full-length human cDNAs.</title>
        <authorList>
            <person name="Ota T."/>
            <person name="Suzuki Y."/>
            <person name="Nishikawa T."/>
            <person name="Otsuki T."/>
            <person name="Sugiyama T."/>
            <person name="Irie R."/>
            <person name="Wakamatsu A."/>
            <person name="Hayashi K."/>
            <person name="Sato H."/>
            <person name="Nagai K."/>
            <person name="Kimura K."/>
            <person name="Makita H."/>
            <person name="Sekine M."/>
            <person name="Obayashi M."/>
            <person name="Nishi T."/>
            <person name="Shibahara T."/>
            <person name="Tanaka T."/>
            <person name="Ishii S."/>
            <person name="Yamamoto J."/>
            <person name="Saito K."/>
            <person name="Kawai Y."/>
            <person name="Isono Y."/>
            <person name="Nakamura Y."/>
            <person name="Nagahari K."/>
            <person name="Murakami K."/>
            <person name="Yasuda T."/>
            <person name="Iwayanagi T."/>
            <person name="Wagatsuma M."/>
            <person name="Shiratori A."/>
            <person name="Sudo H."/>
            <person name="Hosoiri T."/>
            <person name="Kaku Y."/>
            <person name="Kodaira H."/>
            <person name="Kondo H."/>
            <person name="Sugawara M."/>
            <person name="Takahashi M."/>
            <person name="Kanda K."/>
            <person name="Yokoi T."/>
            <person name="Furuya T."/>
            <person name="Kikkawa E."/>
            <person name="Omura Y."/>
            <person name="Abe K."/>
            <person name="Kamihara K."/>
            <person name="Katsuta N."/>
            <person name="Sato K."/>
            <person name="Tanikawa M."/>
            <person name="Yamazaki M."/>
            <person name="Ninomiya K."/>
            <person name="Ishibashi T."/>
            <person name="Yamashita H."/>
            <person name="Murakawa K."/>
            <person name="Fujimori K."/>
            <person name="Tanai H."/>
            <person name="Kimata M."/>
            <person name="Watanabe M."/>
            <person name="Hiraoka S."/>
            <person name="Chiba Y."/>
            <person name="Ishida S."/>
            <person name="Ono Y."/>
            <person name="Takiguchi S."/>
            <person name="Watanabe S."/>
            <person name="Yosida M."/>
            <person name="Hotuta T."/>
            <person name="Kusano J."/>
            <person name="Kanehori K."/>
            <person name="Takahashi-Fujii A."/>
            <person name="Hara H."/>
            <person name="Tanase T.-O."/>
            <person name="Nomura Y."/>
            <person name="Togiya S."/>
            <person name="Komai F."/>
            <person name="Hara R."/>
            <person name="Takeuchi K."/>
            <person name="Arita M."/>
            <person name="Imose N."/>
            <person name="Musashino K."/>
            <person name="Yuuki H."/>
            <person name="Oshima A."/>
            <person name="Sasaki N."/>
            <person name="Aotsuka S."/>
            <person name="Yoshikawa Y."/>
            <person name="Matsunawa H."/>
            <person name="Ichihara T."/>
            <person name="Shiohata N."/>
            <person name="Sano S."/>
            <person name="Moriya S."/>
            <person name="Momiyama H."/>
            <person name="Satoh N."/>
            <person name="Takami S."/>
            <person name="Terashima Y."/>
            <person name="Suzuki O."/>
            <person name="Nakagawa S."/>
            <person name="Senoh A."/>
            <person name="Mizoguchi H."/>
            <person name="Goto Y."/>
            <person name="Shimizu F."/>
            <person name="Wakebe H."/>
            <person name="Hishigaki H."/>
            <person name="Watanabe T."/>
            <person name="Sugiyama A."/>
            <person name="Takemoto M."/>
            <person name="Kawakami B."/>
            <person name="Yamazaki M."/>
            <person name="Watanabe K."/>
            <person name="Kumagai A."/>
            <person name="Itakura S."/>
            <person name="Fukuzumi Y."/>
            <person name="Fujimori Y."/>
            <person name="Komiyama M."/>
            <person name="Tashiro H."/>
            <person name="Tanigami A."/>
            <person name="Fujiwara T."/>
            <person name="Ono T."/>
            <person name="Yamada K."/>
            <person name="Fujii Y."/>
            <person name="Ozaki K."/>
            <person name="Hirao M."/>
            <person name="Ohmori Y."/>
            <person name="Kawabata A."/>
            <person name="Hikiji T."/>
            <person name="Kobatake N."/>
            <person name="Inagaki H."/>
            <person name="Ikema Y."/>
            <person name="Okamoto S."/>
            <person name="Okitani R."/>
            <person name="Kawakami T."/>
            <person name="Noguchi S."/>
            <person name="Itoh T."/>
            <person name="Shigeta K."/>
            <person name="Senba T."/>
            <person name="Matsumura K."/>
            <person name="Nakajima Y."/>
            <person name="Mizuno T."/>
            <person name="Morinaga M."/>
            <person name="Sasaki M."/>
            <person name="Togashi T."/>
            <person name="Oyama M."/>
            <person name="Hata H."/>
            <person name="Watanabe M."/>
            <person name="Komatsu T."/>
            <person name="Mizushima-Sugano J."/>
            <person name="Satoh T."/>
            <person name="Shirai Y."/>
            <person name="Takahashi Y."/>
            <person name="Nakagawa K."/>
            <person name="Okumura K."/>
            <person name="Nagase T."/>
            <person name="Nomura N."/>
            <person name="Kikuchi H."/>
            <person name="Masuho Y."/>
            <person name="Yamashita R."/>
            <person name="Nakai K."/>
            <person name="Yada T."/>
            <person name="Nakamura Y."/>
            <person name="Ohara O."/>
            <person name="Isogai T."/>
            <person name="Sugano S."/>
        </authorList>
    </citation>
    <scope>NUCLEOTIDE SEQUENCE [LARGE SCALE MRNA] (ISOFORMS 3 AND 5)</scope>
    <source>
        <tissue>Synovial cell</tissue>
    </source>
</reference>
<reference key="2">
    <citation type="journal article" date="2006" name="Nature">
        <title>The DNA sequence, annotation and analysis of human chromosome 3.</title>
        <authorList>
            <person name="Muzny D.M."/>
            <person name="Scherer S.E."/>
            <person name="Kaul R."/>
            <person name="Wang J."/>
            <person name="Yu J."/>
            <person name="Sudbrak R."/>
            <person name="Buhay C.J."/>
            <person name="Chen R."/>
            <person name="Cree A."/>
            <person name="Ding Y."/>
            <person name="Dugan-Rocha S."/>
            <person name="Gill R."/>
            <person name="Gunaratne P."/>
            <person name="Harris R.A."/>
            <person name="Hawes A.C."/>
            <person name="Hernandez J."/>
            <person name="Hodgson A.V."/>
            <person name="Hume J."/>
            <person name="Jackson A."/>
            <person name="Khan Z.M."/>
            <person name="Kovar-Smith C."/>
            <person name="Lewis L.R."/>
            <person name="Lozado R.J."/>
            <person name="Metzker M.L."/>
            <person name="Milosavljevic A."/>
            <person name="Miner G.R."/>
            <person name="Morgan M.B."/>
            <person name="Nazareth L.V."/>
            <person name="Scott G."/>
            <person name="Sodergren E."/>
            <person name="Song X.-Z."/>
            <person name="Steffen D."/>
            <person name="Wei S."/>
            <person name="Wheeler D.A."/>
            <person name="Wright M.W."/>
            <person name="Worley K.C."/>
            <person name="Yuan Y."/>
            <person name="Zhang Z."/>
            <person name="Adams C.Q."/>
            <person name="Ansari-Lari M.A."/>
            <person name="Ayele M."/>
            <person name="Brown M.J."/>
            <person name="Chen G."/>
            <person name="Chen Z."/>
            <person name="Clendenning J."/>
            <person name="Clerc-Blankenburg K.P."/>
            <person name="Chen R."/>
            <person name="Chen Z."/>
            <person name="Davis C."/>
            <person name="Delgado O."/>
            <person name="Dinh H.H."/>
            <person name="Dong W."/>
            <person name="Draper H."/>
            <person name="Ernst S."/>
            <person name="Fu G."/>
            <person name="Gonzalez-Garay M.L."/>
            <person name="Garcia D.K."/>
            <person name="Gillett W."/>
            <person name="Gu J."/>
            <person name="Hao B."/>
            <person name="Haugen E."/>
            <person name="Havlak P."/>
            <person name="He X."/>
            <person name="Hennig S."/>
            <person name="Hu S."/>
            <person name="Huang W."/>
            <person name="Jackson L.R."/>
            <person name="Jacob L.S."/>
            <person name="Kelly S.H."/>
            <person name="Kube M."/>
            <person name="Levy R."/>
            <person name="Li Z."/>
            <person name="Liu B."/>
            <person name="Liu J."/>
            <person name="Liu W."/>
            <person name="Lu J."/>
            <person name="Maheshwari M."/>
            <person name="Nguyen B.-V."/>
            <person name="Okwuonu G.O."/>
            <person name="Palmeiri A."/>
            <person name="Pasternak S."/>
            <person name="Perez L.M."/>
            <person name="Phelps K.A."/>
            <person name="Plopper F.J."/>
            <person name="Qiang B."/>
            <person name="Raymond C."/>
            <person name="Rodriguez R."/>
            <person name="Saenphimmachak C."/>
            <person name="Santibanez J."/>
            <person name="Shen H."/>
            <person name="Shen Y."/>
            <person name="Subramanian S."/>
            <person name="Tabor P.E."/>
            <person name="Verduzco D."/>
            <person name="Waldron L."/>
            <person name="Wang J."/>
            <person name="Wang J."/>
            <person name="Wang Q."/>
            <person name="Williams G.A."/>
            <person name="Wong G.K.-S."/>
            <person name="Yao Z."/>
            <person name="Zhang J."/>
            <person name="Zhang X."/>
            <person name="Zhao G."/>
            <person name="Zhou J."/>
            <person name="Zhou Y."/>
            <person name="Nelson D."/>
            <person name="Lehrach H."/>
            <person name="Reinhardt R."/>
            <person name="Naylor S.L."/>
            <person name="Yang H."/>
            <person name="Olson M."/>
            <person name="Weinstock G."/>
            <person name="Gibbs R.A."/>
        </authorList>
    </citation>
    <scope>NUCLEOTIDE SEQUENCE [LARGE SCALE GENOMIC DNA]</scope>
</reference>
<reference key="3">
    <citation type="submission" date="2005-07" db="EMBL/GenBank/DDBJ databases">
        <authorList>
            <person name="Mural R.J."/>
            <person name="Istrail S."/>
            <person name="Sutton G.G."/>
            <person name="Florea L."/>
            <person name="Halpern A.L."/>
            <person name="Mobarry C.M."/>
            <person name="Lippert R."/>
            <person name="Walenz B."/>
            <person name="Shatkay H."/>
            <person name="Dew I."/>
            <person name="Miller J.R."/>
            <person name="Flanigan M.J."/>
            <person name="Edwards N.J."/>
            <person name="Bolanos R."/>
            <person name="Fasulo D."/>
            <person name="Halldorsson B.V."/>
            <person name="Hannenhalli S."/>
            <person name="Turner R."/>
            <person name="Yooseph S."/>
            <person name="Lu F."/>
            <person name="Nusskern D.R."/>
            <person name="Shue B.C."/>
            <person name="Zheng X.H."/>
            <person name="Zhong F."/>
            <person name="Delcher A.L."/>
            <person name="Huson D.H."/>
            <person name="Kravitz S.A."/>
            <person name="Mouchard L."/>
            <person name="Reinert K."/>
            <person name="Remington K.A."/>
            <person name="Clark A.G."/>
            <person name="Waterman M.S."/>
            <person name="Eichler E.E."/>
            <person name="Adams M.D."/>
            <person name="Hunkapiller M.W."/>
            <person name="Myers E.W."/>
            <person name="Venter J.C."/>
        </authorList>
    </citation>
    <scope>NUCLEOTIDE SEQUENCE [LARGE SCALE GENOMIC DNA]</scope>
</reference>
<reference key="4">
    <citation type="journal article" date="2004" name="Genome Res.">
        <title>The status, quality, and expansion of the NIH full-length cDNA project: the Mammalian Gene Collection (MGC).</title>
        <authorList>
            <consortium name="The MGC Project Team"/>
        </authorList>
    </citation>
    <scope>NUCLEOTIDE SEQUENCE [LARGE SCALE MRNA] (ISOFORMS 2 AND 5)</scope>
    <source>
        <tissue>Brain</tissue>
        <tissue>Lung</tissue>
        <tissue>Uterus</tissue>
    </source>
</reference>
<reference key="5">
    <citation type="journal article" date="2008" name="Proc. Natl. Acad. Sci. U.S.A.">
        <title>A quantitative atlas of mitotic phosphorylation.</title>
        <authorList>
            <person name="Dephoure N."/>
            <person name="Zhou C."/>
            <person name="Villen J."/>
            <person name="Beausoleil S.A."/>
            <person name="Bakalarski C.E."/>
            <person name="Elledge S.J."/>
            <person name="Gygi S.P."/>
        </authorList>
    </citation>
    <scope>PHOSPHORYLATION [LARGE SCALE ANALYSIS] AT SER-128</scope>
    <scope>IDENTIFICATION BY MASS SPECTROMETRY [LARGE SCALE ANALYSIS]</scope>
    <source>
        <tissue>Cervix carcinoma</tissue>
    </source>
</reference>
<reference key="6">
    <citation type="journal article" date="2009" name="Sci. Signal.">
        <title>Quantitative phosphoproteomic analysis of T cell receptor signaling reveals system-wide modulation of protein-protein interactions.</title>
        <authorList>
            <person name="Mayya V."/>
            <person name="Lundgren D.H."/>
            <person name="Hwang S.-I."/>
            <person name="Rezaul K."/>
            <person name="Wu L."/>
            <person name="Eng J.K."/>
            <person name="Rodionov V."/>
            <person name="Han D.K."/>
        </authorList>
    </citation>
    <scope>IDENTIFICATION BY MASS SPECTROMETRY [LARGE SCALE ANALYSIS]</scope>
    <source>
        <tissue>Leukemic T-cell</tissue>
    </source>
</reference>
<reference key="7">
    <citation type="journal article" date="2012" name="Curr. Biol.">
        <title>BLOC-3 mutated in Hermansky-Pudlak syndrome is a Rab32/38 guanine nucleotide exchange factor.</title>
        <authorList>
            <person name="Gerondopoulos A."/>
            <person name="Langemeyer L."/>
            <person name="Liang J.R."/>
            <person name="Linford A."/>
            <person name="Barr F.A."/>
        </authorList>
    </citation>
    <scope>FUNCTION</scope>
    <scope>INTERACTION WITH CCZ1</scope>
</reference>
<reference key="8">
    <citation type="journal article" date="2013" name="J. Proteome Res.">
        <title>Toward a comprehensive characterization of a human cancer cell phosphoproteome.</title>
        <authorList>
            <person name="Zhou H."/>
            <person name="Di Palma S."/>
            <person name="Preisinger C."/>
            <person name="Peng M."/>
            <person name="Polat A.N."/>
            <person name="Heck A.J."/>
            <person name="Mohammed S."/>
        </authorList>
    </citation>
    <scope>PHOSPHORYLATION [LARGE SCALE ANALYSIS] AT SER-128; THR-158 AND SER-188</scope>
    <scope>IDENTIFICATION BY MASS SPECTROMETRY [LARGE SCALE ANALYSIS]</scope>
    <source>
        <tissue>Cervix carcinoma</tissue>
        <tissue>Erythroleukemia</tissue>
    </source>
</reference>
<reference key="9">
    <citation type="journal article" date="2014" name="J. Proteomics">
        <title>An enzyme assisted RP-RPLC approach for in-depth analysis of human liver phosphoproteome.</title>
        <authorList>
            <person name="Bian Y."/>
            <person name="Song C."/>
            <person name="Cheng K."/>
            <person name="Dong M."/>
            <person name="Wang F."/>
            <person name="Huang J."/>
            <person name="Sun D."/>
            <person name="Wang L."/>
            <person name="Ye M."/>
            <person name="Zou H."/>
        </authorList>
    </citation>
    <scope>IDENTIFICATION BY MASS SPECTROMETRY [LARGE SCALE ANALYSIS]</scope>
    <source>
        <tissue>Liver</tissue>
    </source>
</reference>
<reference key="10">
    <citation type="journal article" date="2017" name="Mol. Cell. Biol.">
        <title>Systematic analysis of human cells lacking ATG8 proteins uncovers roles for GABARAPs and the CCZ1/MON1 regulator C18orf8/RMC1 in macro and selective autophagic flux.</title>
        <authorList>
            <person name="Pontano Vaites L."/>
            <person name="Paulo J.A."/>
            <person name="Huttlin E.L."/>
            <person name="Harper J.W."/>
        </authorList>
    </citation>
    <scope>IDENTIFICATION IN A COMPLEX WITH RMC1; CCZ1; MON1A AND MON1B</scope>
</reference>
<reference key="11">
    <citation type="journal article" date="2022" name="Autophagy">
        <title>C5orf51 is a component of the MON1-CCZ1 complex and controls RAB7A localization and stability during mitophagy.</title>
        <authorList>
            <person name="Yan B.R."/>
            <person name="Li T."/>
            <person name="Coyaud E."/>
            <person name="Laurent E.M.N."/>
            <person name="St-Germain J."/>
            <person name="Zhou Y."/>
            <person name="Kim P.K."/>
            <person name="Raught B."/>
            <person name="Brumell J.H."/>
        </authorList>
    </citation>
    <scope>INTERACTION OF MON1A/CCZ1B COMPLEX WITH RIMOC1 AND RAB7A</scope>
</reference>
<evidence type="ECO:0000250" key="1">
    <source>
        <dbReference type="UniProtKB" id="Q6PDG8"/>
    </source>
</evidence>
<evidence type="ECO:0000256" key="2">
    <source>
        <dbReference type="SAM" id="MobiDB-lite"/>
    </source>
</evidence>
<evidence type="ECO:0000269" key="3">
    <source>
    </source>
</evidence>
<evidence type="ECO:0000269" key="4">
    <source>
    </source>
</evidence>
<evidence type="ECO:0000269" key="5">
    <source>
    </source>
</evidence>
<evidence type="ECO:0000303" key="6">
    <source>
    </source>
</evidence>
<evidence type="ECO:0000303" key="7">
    <source>
    </source>
</evidence>
<evidence type="ECO:0000305" key="8"/>
<evidence type="ECO:0007744" key="9">
    <source>
    </source>
</evidence>
<evidence type="ECO:0007744" key="10">
    <source>
    </source>
</evidence>
<accession>Q86VX9</accession>
<accession>B2RDQ1</accession>
<accession>G5E9N1</accession>
<accession>Q8NAV7</accession>
<accession>Q9BRF3</accession>
<accession>X6R3V9</accession>
<name>MON1A_HUMAN</name>
<gene>
    <name type="primary">MON1A</name>
    <name type="synonym">SAND1</name>
</gene>
<keyword id="KW-0025">Alternative splicing</keyword>
<keyword id="KW-0344">Guanine-nucleotide releasing factor</keyword>
<keyword id="KW-0597">Phosphoprotein</keyword>
<keyword id="KW-1267">Proteomics identification</keyword>
<keyword id="KW-1185">Reference proteome</keyword>
<dbReference type="EMBL" id="AK092018">
    <property type="protein sequence ID" value="BAC03790.1"/>
    <property type="molecule type" value="mRNA"/>
</dbReference>
<dbReference type="EMBL" id="AK315630">
    <property type="protein sequence ID" value="BAG37998.1"/>
    <property type="molecule type" value="mRNA"/>
</dbReference>
<dbReference type="EMBL" id="AC105935">
    <property type="status" value="NOT_ANNOTATED_CDS"/>
    <property type="molecule type" value="Genomic_DNA"/>
</dbReference>
<dbReference type="EMBL" id="CH471055">
    <property type="protein sequence ID" value="EAW65037.1"/>
    <property type="molecule type" value="Genomic_DNA"/>
</dbReference>
<dbReference type="EMBL" id="CH471055">
    <property type="protein sequence ID" value="EAW65038.1"/>
    <property type="molecule type" value="Genomic_DNA"/>
</dbReference>
<dbReference type="EMBL" id="BC006299">
    <property type="protein sequence ID" value="AAH06299.1"/>
    <property type="molecule type" value="mRNA"/>
</dbReference>
<dbReference type="EMBL" id="BC009459">
    <property type="protein sequence ID" value="AAH09459.1"/>
    <property type="molecule type" value="mRNA"/>
</dbReference>
<dbReference type="EMBL" id="BC047022">
    <property type="protein sequence ID" value="AAH47022.1"/>
    <property type="status" value="ALT_INIT"/>
    <property type="molecule type" value="mRNA"/>
</dbReference>
<dbReference type="CCDS" id="CCDS2808.3">
    <molecule id="Q86VX9-5"/>
</dbReference>
<dbReference type="CCDS" id="CCDS46830.2">
    <molecule id="Q86VX9-2"/>
</dbReference>
<dbReference type="RefSeq" id="NP_001135973.2">
    <molecule id="Q86VX9-2"/>
    <property type="nucleotide sequence ID" value="NM_001142501.2"/>
</dbReference>
<dbReference type="RefSeq" id="NP_115731.3">
    <molecule id="Q86VX9-5"/>
    <property type="nucleotide sequence ID" value="NM_032355.4"/>
</dbReference>
<dbReference type="RefSeq" id="XP_006713408.1">
    <molecule id="Q86VX9-5"/>
    <property type="nucleotide sequence ID" value="XM_006713345.5"/>
</dbReference>
<dbReference type="RefSeq" id="XP_011532462.1">
    <molecule id="Q86VX9-5"/>
    <property type="nucleotide sequence ID" value="XM_011534160.2"/>
</dbReference>
<dbReference type="RefSeq" id="XP_054204064.1">
    <molecule id="Q86VX9-5"/>
    <property type="nucleotide sequence ID" value="XM_054348089.1"/>
</dbReference>
<dbReference type="RefSeq" id="XP_054204065.1">
    <molecule id="Q86VX9-5"/>
    <property type="nucleotide sequence ID" value="XM_054348090.1"/>
</dbReference>
<dbReference type="SMR" id="Q86VX9"/>
<dbReference type="BioGRID" id="124041">
    <property type="interactions" value="14"/>
</dbReference>
<dbReference type="ComplexPortal" id="CPX-8153">
    <property type="entry name" value="MON1-CCZ1 guanyl-nucleotide exchange factor complex, MON1A variant"/>
</dbReference>
<dbReference type="ComplexPortal" id="CPX-8165">
    <property type="entry name" value="MON1-CCZ1B guanyl-nucleotide exchange factor complex, MON1A variant"/>
</dbReference>
<dbReference type="CORUM" id="Q86VX9"/>
<dbReference type="FunCoup" id="Q86VX9">
    <property type="interactions" value="536"/>
</dbReference>
<dbReference type="IntAct" id="Q86VX9">
    <property type="interactions" value="12"/>
</dbReference>
<dbReference type="MINT" id="Q86VX9"/>
<dbReference type="STRING" id="9606.ENSP00000296473"/>
<dbReference type="GlyGen" id="Q86VX9">
    <property type="glycosylation" value="2 sites, 1 O-linked glycan (1 site)"/>
</dbReference>
<dbReference type="iPTMnet" id="Q86VX9"/>
<dbReference type="PhosphoSitePlus" id="Q86VX9"/>
<dbReference type="BioMuta" id="MON1A"/>
<dbReference type="DMDM" id="146324996"/>
<dbReference type="jPOST" id="Q86VX9"/>
<dbReference type="MassIVE" id="Q86VX9"/>
<dbReference type="PaxDb" id="9606-ENSP00000296473"/>
<dbReference type="PeptideAtlas" id="Q86VX9"/>
<dbReference type="ProteomicsDB" id="33990"/>
<dbReference type="ProteomicsDB" id="70086">
    <molecule id="Q86VX9-1"/>
</dbReference>
<dbReference type="ProteomicsDB" id="70087">
    <molecule id="Q86VX9-2"/>
</dbReference>
<dbReference type="ProteomicsDB" id="70088">
    <molecule id="Q86VX9-3"/>
</dbReference>
<dbReference type="Pumba" id="Q86VX9"/>
<dbReference type="Antibodypedia" id="46026">
    <property type="antibodies" value="158 antibodies from 26 providers"/>
</dbReference>
<dbReference type="DNASU" id="84315"/>
<dbReference type="Ensembl" id="ENST00000296473.8">
    <molecule id="Q86VX9-5"/>
    <property type="protein sequence ID" value="ENSP00000296473.4"/>
    <property type="gene ID" value="ENSG00000164077.15"/>
</dbReference>
<dbReference type="Ensembl" id="ENST00000417270.2">
    <molecule id="Q86VX9-5"/>
    <property type="protein sequence ID" value="ENSP00000399613.2"/>
    <property type="gene ID" value="ENSG00000164077.15"/>
</dbReference>
<dbReference type="Ensembl" id="ENST00000455683.7">
    <molecule id="Q86VX9-2"/>
    <property type="protein sequence ID" value="ENSP00000404793.3"/>
    <property type="gene ID" value="ENSG00000164077.15"/>
</dbReference>
<dbReference type="Ensembl" id="ENST00000642691.1">
    <molecule id="Q86VX9-5"/>
    <property type="protein sequence ID" value="ENSP00000494294.1"/>
    <property type="gene ID" value="ENSG00000164077.15"/>
</dbReference>
<dbReference type="Ensembl" id="ENST00000645862.1">
    <molecule id="Q86VX9-5"/>
    <property type="protein sequence ID" value="ENSP00000494452.1"/>
    <property type="gene ID" value="ENSG00000164077.15"/>
</dbReference>
<dbReference type="GeneID" id="84315"/>
<dbReference type="KEGG" id="hsa:84315"/>
<dbReference type="MANE-Select" id="ENST00000296473.8">
    <molecule id="Q86VX9-5"/>
    <property type="protein sequence ID" value="ENSP00000296473.4"/>
    <property type="RefSeq nucleotide sequence ID" value="NM_032355.4"/>
    <property type="RefSeq protein sequence ID" value="NP_115731.3"/>
</dbReference>
<dbReference type="UCSC" id="uc003cxz.4">
    <property type="organism name" value="human"/>
</dbReference>
<dbReference type="UCSC" id="uc003cya.4">
    <molecule id="Q86VX9-1"/>
    <property type="organism name" value="human"/>
</dbReference>
<dbReference type="AGR" id="HGNC:28207"/>
<dbReference type="CTD" id="84315"/>
<dbReference type="DisGeNET" id="84315"/>
<dbReference type="GeneCards" id="MON1A"/>
<dbReference type="HGNC" id="HGNC:28207">
    <property type="gene designation" value="MON1A"/>
</dbReference>
<dbReference type="HPA" id="ENSG00000164077">
    <property type="expression patterns" value="Low tissue specificity"/>
</dbReference>
<dbReference type="MIM" id="611464">
    <property type="type" value="gene"/>
</dbReference>
<dbReference type="neXtProt" id="NX_Q86VX9"/>
<dbReference type="OpenTargets" id="ENSG00000164077"/>
<dbReference type="PharmGKB" id="PA142671340"/>
<dbReference type="VEuPathDB" id="HostDB:ENSG00000164077"/>
<dbReference type="eggNOG" id="KOG0997">
    <property type="taxonomic scope" value="Eukaryota"/>
</dbReference>
<dbReference type="GeneTree" id="ENSGT00390000006665"/>
<dbReference type="HOGENOM" id="CLU_014574_1_1_1"/>
<dbReference type="InParanoid" id="Q86VX9"/>
<dbReference type="OMA" id="QQPFNAK"/>
<dbReference type="OrthoDB" id="272411at2759"/>
<dbReference type="PAN-GO" id="Q86VX9">
    <property type="GO annotations" value="1 GO annotation based on evolutionary models"/>
</dbReference>
<dbReference type="PhylomeDB" id="Q86VX9"/>
<dbReference type="TreeFam" id="TF314665"/>
<dbReference type="PathwayCommons" id="Q86VX9"/>
<dbReference type="Reactome" id="R-HSA-8876198">
    <property type="pathway name" value="RAB GEFs exchange GTP for GDP on RABs"/>
</dbReference>
<dbReference type="SignaLink" id="Q86VX9"/>
<dbReference type="BioGRID-ORCS" id="84315">
    <property type="hits" value="21 hits in 1150 CRISPR screens"/>
</dbReference>
<dbReference type="ChiTaRS" id="MON1A">
    <property type="organism name" value="human"/>
</dbReference>
<dbReference type="GenomeRNAi" id="84315"/>
<dbReference type="Pharos" id="Q86VX9">
    <property type="development level" value="Tbio"/>
</dbReference>
<dbReference type="PRO" id="PR:Q86VX9"/>
<dbReference type="Proteomes" id="UP000005640">
    <property type="component" value="Chromosome 3"/>
</dbReference>
<dbReference type="RNAct" id="Q86VX9">
    <property type="molecule type" value="protein"/>
</dbReference>
<dbReference type="Bgee" id="ENSG00000164077">
    <property type="expression patterns" value="Expressed in prefrontal cortex and 166 other cell types or tissues"/>
</dbReference>
<dbReference type="ExpressionAtlas" id="Q86VX9">
    <property type="expression patterns" value="baseline and differential"/>
</dbReference>
<dbReference type="GO" id="GO:0005829">
    <property type="term" value="C:cytosol"/>
    <property type="evidence" value="ECO:0000304"/>
    <property type="project" value="Reactome"/>
</dbReference>
<dbReference type="GO" id="GO:0035658">
    <property type="term" value="C:Mon1-Ccz1 complex"/>
    <property type="evidence" value="ECO:0000314"/>
    <property type="project" value="UniProtKB"/>
</dbReference>
<dbReference type="GO" id="GO:0005085">
    <property type="term" value="F:guanyl-nucleotide exchange factor activity"/>
    <property type="evidence" value="ECO:0000314"/>
    <property type="project" value="UniProtKB"/>
</dbReference>
<dbReference type="GO" id="GO:0009306">
    <property type="term" value="P:protein secretion"/>
    <property type="evidence" value="ECO:0000318"/>
    <property type="project" value="GO_Central"/>
</dbReference>
<dbReference type="GO" id="GO:0006623">
    <property type="term" value="P:protein targeting to vacuole"/>
    <property type="evidence" value="ECO:0007669"/>
    <property type="project" value="InterPro"/>
</dbReference>
<dbReference type="GO" id="GO:0016192">
    <property type="term" value="P:vesicle-mediated transport"/>
    <property type="evidence" value="ECO:0007669"/>
    <property type="project" value="InterPro"/>
</dbReference>
<dbReference type="InterPro" id="IPR043972">
    <property type="entry name" value="FUZ/MON1/HPS1_longin_1"/>
</dbReference>
<dbReference type="InterPro" id="IPR043971">
    <property type="entry name" value="FUZ/MON1/HPS1_longin_2"/>
</dbReference>
<dbReference type="InterPro" id="IPR043970">
    <property type="entry name" value="FUZ/MON1/HPS1_longin_3"/>
</dbReference>
<dbReference type="InterPro" id="IPR004353">
    <property type="entry name" value="Mon1"/>
</dbReference>
<dbReference type="PANTHER" id="PTHR13027">
    <property type="entry name" value="SAND PROTEIN-RELATED"/>
    <property type="match status" value="1"/>
</dbReference>
<dbReference type="PANTHER" id="PTHR13027:SF14">
    <property type="entry name" value="VACUOLAR FUSION PROTEIN MON1 HOMOLOG A"/>
    <property type="match status" value="1"/>
</dbReference>
<dbReference type="Pfam" id="PF19036">
    <property type="entry name" value="Fuz_longin_1"/>
    <property type="match status" value="1"/>
</dbReference>
<dbReference type="Pfam" id="PF19037">
    <property type="entry name" value="Fuz_longin_2"/>
    <property type="match status" value="1"/>
</dbReference>
<dbReference type="Pfam" id="PF19038">
    <property type="entry name" value="Fuz_longin_3"/>
    <property type="match status" value="1"/>
</dbReference>
<dbReference type="PRINTS" id="PR01546">
    <property type="entry name" value="YEAST73DUF"/>
</dbReference>
<sequence length="652" mass="72895">MHPGGGPSRAERLELGLGRERPAKAIFLHRRPGEGGGRERCLRCGHVCVRRGPGPREAVPSGRPRPDTLTPPWVRQRAVTGTFCASWTPLRNRRAQRMATDMQRKRSSECLDGTLTPSDGQSMERAESPTPGMAQGMEPGAGQEGAMFVHARSYEDLTESEDGAASGDSHKEGTRGPPPLPTDMRQISQDFSELSTQLTGVARDLQEEMLPGSSEDWLEPPGAVGRPATEPPREGTTEGDEEDATEAWRLHQKHVFVLSEAGKPVYSRYGSEEALSSTMGVMVALVSFLEADKNAIRSIHADGYKVVFVRRSPLVLVAVARTRQSAQELAQELLYIYYQILSLLTGAQLSHIFQQKQNYDLRRLLSGSERITDNLLQLMARDPSFLMGAARCLPLAAAVRDTVSASLQQARARSLVFSILLARNQLVALVRRKDQFLHPIDLHLLFNLISSSSSFREGEAWTPVCLPKFNAAGFFHAHISYLEPDTDLCLLLVSTDREDFFAVSDCRRRFQERLRKRGAHLALREALRTPYYSVAQVGIPDLRHFLYKSKSSGLFTSPEIEAPYTSEEEQERLLGLYQYLHSRAHNASRPLKTIYYTGPNENLLAWVTGAFELYMCYSPLGTKASAVSAIHKLMRWIRKEEDRLFILTPLTY</sequence>
<feature type="chain" id="PRO_0000285761" description="Vacuolar fusion protein MON1 homolog A">
    <location>
        <begin position="1"/>
        <end position="652"/>
    </location>
</feature>
<feature type="region of interest" description="Disordered" evidence="2">
    <location>
        <begin position="102"/>
        <end position="141"/>
    </location>
</feature>
<feature type="region of interest" description="Disordered" evidence="2">
    <location>
        <begin position="158"/>
        <end position="185"/>
    </location>
</feature>
<feature type="region of interest" description="Disordered" evidence="2">
    <location>
        <begin position="211"/>
        <end position="245"/>
    </location>
</feature>
<feature type="modified residue" description="Phosphoserine" evidence="9 10">
    <location>
        <position position="128"/>
    </location>
</feature>
<feature type="modified residue" description="Phosphoserine" evidence="1">
    <location>
        <position position="153"/>
    </location>
</feature>
<feature type="modified residue" description="Phosphothreonine" evidence="10">
    <location>
        <position position="158"/>
    </location>
</feature>
<feature type="modified residue" description="Phosphoserine" evidence="10">
    <location>
        <position position="188"/>
    </location>
</feature>
<feature type="splice variant" id="VSP_059430" description="In isoform 5, isoform 2 and isoform 3." evidence="6 7">
    <location>
        <begin position="1"/>
        <end position="97"/>
    </location>
</feature>
<feature type="splice variant" id="VSP_059431" description="In isoform 2, isoform 3 and isoform 4." evidence="6 7">
    <location>
        <begin position="140"/>
        <end position="301"/>
    </location>
</feature>
<feature type="splice variant" id="VSP_059432" description="In isoform 3." evidence="6">
    <original>S</original>
    <variation>R</variation>
    <location>
        <position position="557"/>
    </location>
</feature>
<feature type="splice variant" id="VSP_059433" description="In isoform 3." evidence="6">
    <location>
        <begin position="558"/>
        <end position="652"/>
    </location>
</feature>
<protein>
    <recommendedName>
        <fullName>Vacuolar fusion protein MON1 homolog A</fullName>
    </recommendedName>
</protein>
<organism>
    <name type="scientific">Homo sapiens</name>
    <name type="common">Human</name>
    <dbReference type="NCBI Taxonomy" id="9606"/>
    <lineage>
        <taxon>Eukaryota</taxon>
        <taxon>Metazoa</taxon>
        <taxon>Chordata</taxon>
        <taxon>Craniata</taxon>
        <taxon>Vertebrata</taxon>
        <taxon>Euteleostomi</taxon>
        <taxon>Mammalia</taxon>
        <taxon>Eutheria</taxon>
        <taxon>Euarchontoglires</taxon>
        <taxon>Primates</taxon>
        <taxon>Haplorrhini</taxon>
        <taxon>Catarrhini</taxon>
        <taxon>Hominidae</taxon>
        <taxon>Homo</taxon>
    </lineage>
</organism>
<comment type="function">
    <text evidence="1 3">Plays an important role in membrane trafficking through the secretory apparatus. Not involved in endocytic trafficking to lysosomes (By similarity). Acts in concert with CCZ1, as a guanine exchange factor (GEF) for RAB7, promotes the exchange of GDP to GTP, converting it from an inactive GDP-bound form into an active GTP-bound form (PubMed:23084991).</text>
</comment>
<comment type="subunit">
    <text evidence="3 4 5">Interacts with CCZ1 (PubMed:23084991). Found in a complex with RMC1, CCZ1, MON1A and MON1B (PubMed:29038162). The MON1A-CCZ1B complex interacts with RIMOC1 (PubMed:34432599). The MON1A-CCZ1B complex interacts with RAB7A and this interaction is enhanced in the presence of RIMOC1 (PubMed:34432599).</text>
</comment>
<comment type="interaction">
    <interactant intactId="EBI-949638">
        <id>Q86VX9</id>
    </interactant>
    <interactant intactId="EBI-46436054">
        <id>P86791</id>
        <label>CCZ1</label>
    </interactant>
    <organismsDiffer>false</organismsDiffer>
    <experiments>3</experiments>
</comment>
<comment type="alternative products">
    <event type="alternative splicing"/>
    <isoform>
        <id>Q86VX9-1</id>
        <name>1</name>
        <sequence type="displayed"/>
    </isoform>
    <isoform>
        <id>Q86VX9-2</id>
        <name>2</name>
        <sequence type="described" ref="VSP_059430 VSP_059431"/>
    </isoform>
    <isoform>
        <id>Q86VX9-3</id>
        <name>3</name>
        <sequence type="described" ref="VSP_059430 VSP_059431 VSP_059432 VSP_059433"/>
    </isoform>
    <isoform>
        <id>Q86VX9-4</id>
        <name>4</name>
        <sequence type="described" ref="VSP_059431"/>
    </isoform>
    <isoform>
        <id>Q86VX9-5</id>
        <name>5</name>
        <sequence type="described" ref="VSP_059430"/>
    </isoform>
</comment>
<comment type="similarity">
    <text evidence="8">Belongs to the MON1/SAND family.</text>
</comment>
<comment type="sequence caution" evidence="8">
    <conflict type="erroneous initiation">
        <sequence resource="EMBL-CDS" id="AAH47022"/>
    </conflict>
    <text>Truncated N-terminus.</text>
</comment>
<proteinExistence type="evidence at protein level"/>